<evidence type="ECO:0000250" key="1">
    <source>
        <dbReference type="UniProtKB" id="P91889"/>
    </source>
</evidence>
<evidence type="ECO:0000250" key="2">
    <source>
        <dbReference type="UniProtKB" id="Q9GSL0"/>
    </source>
</evidence>
<evidence type="ECO:0000255" key="3"/>
<evidence type="ECO:0000256" key="4">
    <source>
        <dbReference type="SAM" id="MobiDB-lite"/>
    </source>
</evidence>
<evidence type="ECO:0000269" key="5">
    <source>
    </source>
</evidence>
<evidence type="ECO:0000305" key="6"/>
<evidence type="ECO:0000312" key="7">
    <source>
        <dbReference type="EMBL" id="ACI22791.1"/>
    </source>
</evidence>
<gene>
    <name evidence="1" type="primary">FMRFa</name>
</gene>
<protein>
    <recommendedName>
        <fullName evidence="1">FMRFamide-related neuropeptides</fullName>
    </recommendedName>
    <component>
        <recommendedName>
            <fullName evidence="1">FIRF-amide</fullName>
        </recommendedName>
    </component>
    <component>
        <recommendedName>
            <fullName evidence="1">ALSGDAFLRF-amide</fullName>
        </recommendedName>
    </component>
    <component>
        <recommendedName>
            <fullName evidence="1">FLRF-amide</fullName>
        </recommendedName>
    </component>
    <component>
        <recommendedName>
            <fullName evidence="1">FMRF-amide 1</fullName>
        </recommendedName>
    </component>
    <component>
        <recommendedName>
            <fullName evidence="1">FMRF-amide 2</fullName>
        </recommendedName>
    </component>
    <component>
        <recommendedName>
            <fullName evidence="1">FMRF-amide 3</fullName>
        </recommendedName>
    </component>
    <component>
        <recommendedName>
            <fullName evidence="1">FMRF-amide 4</fullName>
        </recommendedName>
    </component>
    <component>
        <recommendedName>
            <fullName evidence="1">FMRF-amide 5</fullName>
        </recommendedName>
    </component>
    <component>
        <recommendedName>
            <fullName evidence="1">FMRF-amide 6</fullName>
        </recommendedName>
    </component>
    <component>
        <recommendedName>
            <fullName evidence="1">FMRF-amide 7</fullName>
        </recommendedName>
    </component>
    <component>
        <recommendedName>
            <fullName evidence="1">FMRF-amide 8</fullName>
        </recommendedName>
    </component>
    <component>
        <recommendedName>
            <fullName evidence="1">FMRF-amide 9</fullName>
        </recommendedName>
    </component>
    <component>
        <recommendedName>
            <fullName evidence="1">FMRF-amide 10</fullName>
        </recommendedName>
    </component>
    <component>
        <recommendedName>
            <fullName evidence="1">FMRF-amide 11</fullName>
        </recommendedName>
    </component>
</protein>
<comment type="function">
    <text evidence="1 5">Excitatory neurotransmitters that directly modulate chromatophore function by activating chromatophore expansion at the chromatophore neuromuscular junction.</text>
</comment>
<comment type="subcellular location">
    <subcellularLocation>
        <location evidence="1">Secreted</location>
    </subcellularLocation>
</comment>
<comment type="similarity">
    <text evidence="3">Belongs to the FARP (FMRFamide related peptide) family.</text>
</comment>
<proteinExistence type="evidence at transcript level"/>
<feature type="signal peptide" evidence="3">
    <location>
        <begin position="1"/>
        <end position="25"/>
    </location>
</feature>
<feature type="propeptide" id="PRO_0000404026" evidence="1">
    <location>
        <begin position="26"/>
        <end position="65"/>
    </location>
</feature>
<feature type="peptide" id="PRO_0000404027" description="FIRF-amide" evidence="1">
    <location>
        <begin position="68"/>
        <end position="71"/>
    </location>
</feature>
<feature type="peptide" id="PRO_0000404028" description="ALSGDAFLRF-amide" evidence="1">
    <location>
        <begin position="74"/>
        <end position="83"/>
    </location>
</feature>
<feature type="propeptide" id="PRO_0000404029" evidence="1">
    <location>
        <begin position="86"/>
        <end position="94"/>
    </location>
</feature>
<feature type="peptide" id="PRO_0000404030" description="FLRF-amide" evidence="1">
    <location>
        <begin position="97"/>
        <end position="100"/>
    </location>
</feature>
<feature type="propeptide" id="PRO_0000404031" evidence="1">
    <location>
        <begin position="103"/>
        <end position="168"/>
    </location>
</feature>
<feature type="peptide" id="PRO_0000404032" description="FMRF-amide 1" evidence="1">
    <location>
        <begin position="171"/>
        <end position="174"/>
    </location>
</feature>
<feature type="peptide" id="PRO_0000404033" description="FMRF-amide 2" evidence="1">
    <location>
        <begin position="178"/>
        <end position="181"/>
    </location>
</feature>
<feature type="propeptide" id="PRO_0000404034" evidence="1">
    <location>
        <begin position="184"/>
        <end position="194"/>
    </location>
</feature>
<feature type="peptide" id="PRO_0000404035" description="FMRF-amide 3" evidence="1">
    <location>
        <begin position="197"/>
        <end position="200"/>
    </location>
</feature>
<feature type="propeptide" id="PRO_0000404036" evidence="1">
    <location>
        <begin position="203"/>
        <end position="205"/>
    </location>
</feature>
<feature type="peptide" id="PRO_0000404037" description="FMRF-amide 4" evidence="1">
    <location>
        <begin position="208"/>
        <end position="211"/>
    </location>
</feature>
<feature type="propeptide" id="PRO_0000404038" evidence="1">
    <location>
        <begin position="214"/>
        <end position="216"/>
    </location>
</feature>
<feature type="peptide" id="PRO_0000404039" description="FMRF-amide 5" evidence="1">
    <location>
        <begin position="219"/>
        <end position="222"/>
    </location>
</feature>
<feature type="propeptide" id="PRO_0000404040" evidence="1">
    <location>
        <begin position="225"/>
        <end position="236"/>
    </location>
</feature>
<feature type="peptide" id="PRO_0000404041" description="FMRF-amide 6" evidence="1">
    <location>
        <begin position="239"/>
        <end position="242"/>
    </location>
</feature>
<feature type="propeptide" id="PRO_0000404042" evidence="1">
    <location>
        <begin position="245"/>
        <end position="254"/>
    </location>
</feature>
<feature type="peptide" id="PRO_0000404043" description="FMRF-amide 7" evidence="1">
    <location>
        <begin position="257"/>
        <end position="260"/>
    </location>
</feature>
<feature type="propeptide" id="PRO_0000404044" evidence="1">
    <location>
        <begin position="263"/>
        <end position="265"/>
    </location>
</feature>
<feature type="peptide" id="PRO_0000404045" description="FMRF-amide 8" evidence="1">
    <location>
        <begin position="268"/>
        <end position="271"/>
    </location>
</feature>
<feature type="propeptide" id="PRO_0000404046" evidence="1">
    <location>
        <begin position="274"/>
        <end position="277"/>
    </location>
</feature>
<feature type="peptide" id="PRO_0000404047" description="FMRF-amide 9" evidence="1">
    <location>
        <begin position="280"/>
        <end position="283"/>
    </location>
</feature>
<feature type="propeptide" id="PRO_0000404048" evidence="1">
    <location>
        <begin position="286"/>
        <end position="293"/>
    </location>
</feature>
<feature type="peptide" id="PRO_0000404049" description="FMRF-amide 10" evidence="1">
    <location>
        <begin position="296"/>
        <end position="299"/>
    </location>
</feature>
<feature type="propeptide" id="PRO_0000404050" evidence="1">
    <location>
        <begin position="302"/>
        <end position="312"/>
    </location>
</feature>
<feature type="peptide" id="PRO_0000404051" description="FMRF-amide 11" evidence="1">
    <location>
        <begin position="315"/>
        <end position="318"/>
    </location>
</feature>
<feature type="propeptide" id="PRO_0000404052" evidence="1">
    <location>
        <begin position="321"/>
        <end position="331"/>
    </location>
</feature>
<feature type="region of interest" description="Disordered" evidence="4">
    <location>
        <begin position="122"/>
        <end position="158"/>
    </location>
</feature>
<feature type="region of interest" description="Disordered" evidence="4">
    <location>
        <begin position="282"/>
        <end position="310"/>
    </location>
</feature>
<feature type="compositionally biased region" description="Basic and acidic residues" evidence="4">
    <location>
        <begin position="146"/>
        <end position="158"/>
    </location>
</feature>
<feature type="compositionally biased region" description="Basic and acidic residues" evidence="4">
    <location>
        <begin position="282"/>
        <end position="296"/>
    </location>
</feature>
<feature type="modified residue" description="Phenylalanine amide" evidence="2">
    <location>
        <position position="71"/>
    </location>
</feature>
<feature type="modified residue" description="Phenylalanine amide" evidence="2">
    <location>
        <position position="83"/>
    </location>
</feature>
<feature type="modified residue" description="Phenylalanine amide" evidence="2">
    <location>
        <position position="100"/>
    </location>
</feature>
<feature type="modified residue" description="Phenylalanine amide" evidence="2">
    <location>
        <position position="174"/>
    </location>
</feature>
<feature type="modified residue" description="Phenylalanine amide" evidence="2">
    <location>
        <position position="181"/>
    </location>
</feature>
<feature type="modified residue" description="Phenylalanine amide" evidence="2">
    <location>
        <position position="200"/>
    </location>
</feature>
<feature type="modified residue" description="Phenylalanine amide" evidence="2">
    <location>
        <position position="211"/>
    </location>
</feature>
<feature type="modified residue" description="Phenylalanine amide" evidence="2">
    <location>
        <position position="222"/>
    </location>
</feature>
<feature type="modified residue" description="Phenylalanine amide" evidence="2">
    <location>
        <position position="242"/>
    </location>
</feature>
<feature type="modified residue" description="Phenylalanine amide" evidence="2">
    <location>
        <position position="260"/>
    </location>
</feature>
<feature type="modified residue" description="Phenylalanine amide" evidence="2">
    <location>
        <position position="271"/>
    </location>
</feature>
<feature type="modified residue" description="Phenylalanine amide" evidence="2">
    <location>
        <position position="283"/>
    </location>
</feature>
<feature type="modified residue" description="Phenylalanine amide" evidence="2">
    <location>
        <position position="299"/>
    </location>
</feature>
<feature type="modified residue" description="Phenylalanine amide" evidence="2">
    <location>
        <position position="318"/>
    </location>
</feature>
<keyword id="KW-0027">Amidation</keyword>
<keyword id="KW-0165">Cleavage on pair of basic residues</keyword>
<keyword id="KW-0527">Neuropeptide</keyword>
<keyword id="KW-0677">Repeat</keyword>
<keyword id="KW-0964">Secreted</keyword>
<keyword id="KW-0732">Signal</keyword>
<accession>B6E465</accession>
<name>FMRF_DORPE</name>
<organism>
    <name type="scientific">Doryteuthis pealeii</name>
    <name type="common">Longfin inshore squid</name>
    <name type="synonym">Loligo pealeii</name>
    <dbReference type="NCBI Taxonomy" id="1051067"/>
    <lineage>
        <taxon>Eukaryota</taxon>
        <taxon>Metazoa</taxon>
        <taxon>Spiralia</taxon>
        <taxon>Lophotrochozoa</taxon>
        <taxon>Mollusca</taxon>
        <taxon>Cephalopoda</taxon>
        <taxon>Coleoidea</taxon>
        <taxon>Decapodiformes</taxon>
        <taxon>Myopsida</taxon>
        <taxon>Loliginidae</taxon>
        <taxon>Doryteuthis</taxon>
    </lineage>
</organism>
<sequence length="331" mass="38650">MRCWSPCSLLVVIVIYCLSSHTSEAFDLAQACVESQRLSLLPICDTIFAVQQEGAQQSADDGMRSKRFIRFGRALSGDAFLRFGKNVPDLPFEDKRFLRFGRAAPQLDDLLKQALQRVESLQKADETSVRRKRSTDAAPQNNAENPEQKNDSAKITKRYIDDVEDSDVKRFMRFGKRFMRFGRNPSDAGNKLTEKRFMRFGRDPEKRFMRFGKSDDKRFMRFGRNPSDVEDELEEDKRFMRFGRGGEDDEEEAEKRFMRFGRDPEKKFMRFGKSGEDKRFMRFGRNPDEQEADKRFMRFGRGGEDDEVSTEDKRFMRFGRSADKCKGCLEG</sequence>
<dbReference type="EMBL" id="FJ205479">
    <property type="protein sequence ID" value="ACI22791.1"/>
    <property type="molecule type" value="mRNA"/>
</dbReference>
<dbReference type="GO" id="GO:0005576">
    <property type="term" value="C:extracellular region"/>
    <property type="evidence" value="ECO:0007669"/>
    <property type="project" value="UniProtKB-SubCell"/>
</dbReference>
<dbReference type="GO" id="GO:0007218">
    <property type="term" value="P:neuropeptide signaling pathway"/>
    <property type="evidence" value="ECO:0007669"/>
    <property type="project" value="UniProtKB-KW"/>
</dbReference>
<dbReference type="InterPro" id="IPR002544">
    <property type="entry name" value="FMRFamid-related_peptide-like"/>
</dbReference>
<dbReference type="InterPro" id="IPR051041">
    <property type="entry name" value="FMRFamide-related_np"/>
</dbReference>
<dbReference type="PANTHER" id="PTHR20986">
    <property type="entry name" value="FMRFAMIDE-RELATED PEPTIDES"/>
    <property type="match status" value="1"/>
</dbReference>
<dbReference type="PANTHER" id="PTHR20986:SF22">
    <property type="entry name" value="FMRFAMIDE-RELATED PEPTIDES"/>
    <property type="match status" value="1"/>
</dbReference>
<dbReference type="Pfam" id="PF01581">
    <property type="entry name" value="FARP"/>
    <property type="match status" value="13"/>
</dbReference>
<reference evidence="7" key="1">
    <citation type="submission" date="2008-09" db="EMBL/GenBank/DDBJ databases">
        <title>Expression of the FMRF-amide precursor in the nervous system of the squid Loligo pealei.</title>
        <authorList>
            <person name="Burbach J.P.H."/>
            <person name="Hellemons A.J.C.G.M."/>
            <person name="Grant P."/>
            <person name="DeGiorgis J.A."/>
            <person name="Pant H.C."/>
        </authorList>
    </citation>
    <scope>NUCLEOTIDE SEQUENCE [MRNA]</scope>
</reference>
<reference evidence="6" key="2">
    <citation type="journal article" date="1992" name="Exp. Physiol.">
        <title>FMRFamide-related peptides potentiate transmission at the squid giant synapse.</title>
        <authorList>
            <person name="Cottrell G.A."/>
            <person name="Lin J.W."/>
            <person name="Llinas R."/>
            <person name="Price D.A."/>
            <person name="Sugimori M."/>
            <person name="Stanley E.F."/>
        </authorList>
    </citation>
    <scope>FUNCTION</scope>
</reference>